<dbReference type="EC" id="2.4.2.10" evidence="1"/>
<dbReference type="EMBL" id="BX897699">
    <property type="protein sequence ID" value="CAF27313.1"/>
    <property type="molecule type" value="Genomic_DNA"/>
</dbReference>
<dbReference type="RefSeq" id="WP_011180436.1">
    <property type="nucleotide sequence ID" value="NZ_LRIJ02000001.1"/>
</dbReference>
<dbReference type="SMR" id="Q6G463"/>
<dbReference type="PaxDb" id="283166-BH05050"/>
<dbReference type="EnsemblBacteria" id="CAF27313">
    <property type="protein sequence ID" value="CAF27313"/>
    <property type="gene ID" value="BH05050"/>
</dbReference>
<dbReference type="GeneID" id="92985162"/>
<dbReference type="KEGG" id="bhe:BH05050"/>
<dbReference type="eggNOG" id="COG0461">
    <property type="taxonomic scope" value="Bacteria"/>
</dbReference>
<dbReference type="OrthoDB" id="9783570at2"/>
<dbReference type="UniPathway" id="UPA00070">
    <property type="reaction ID" value="UER00119"/>
</dbReference>
<dbReference type="Proteomes" id="UP000000421">
    <property type="component" value="Chromosome"/>
</dbReference>
<dbReference type="GO" id="GO:0000287">
    <property type="term" value="F:magnesium ion binding"/>
    <property type="evidence" value="ECO:0007669"/>
    <property type="project" value="UniProtKB-UniRule"/>
</dbReference>
<dbReference type="GO" id="GO:0004588">
    <property type="term" value="F:orotate phosphoribosyltransferase activity"/>
    <property type="evidence" value="ECO:0007669"/>
    <property type="project" value="UniProtKB-UniRule"/>
</dbReference>
<dbReference type="GO" id="GO:0044205">
    <property type="term" value="P:'de novo' UMP biosynthetic process"/>
    <property type="evidence" value="ECO:0007669"/>
    <property type="project" value="UniProtKB-UniRule"/>
</dbReference>
<dbReference type="GO" id="GO:0019856">
    <property type="term" value="P:pyrimidine nucleobase biosynthetic process"/>
    <property type="evidence" value="ECO:0007669"/>
    <property type="project" value="InterPro"/>
</dbReference>
<dbReference type="CDD" id="cd06223">
    <property type="entry name" value="PRTases_typeI"/>
    <property type="match status" value="1"/>
</dbReference>
<dbReference type="Gene3D" id="3.40.50.2020">
    <property type="match status" value="1"/>
</dbReference>
<dbReference type="HAMAP" id="MF_01208">
    <property type="entry name" value="PyrE"/>
    <property type="match status" value="1"/>
</dbReference>
<dbReference type="InterPro" id="IPR023031">
    <property type="entry name" value="OPRT"/>
</dbReference>
<dbReference type="InterPro" id="IPR006273">
    <property type="entry name" value="Orotate_PRibTrfase_bac"/>
</dbReference>
<dbReference type="InterPro" id="IPR000836">
    <property type="entry name" value="PRibTrfase_dom"/>
</dbReference>
<dbReference type="InterPro" id="IPR029057">
    <property type="entry name" value="PRTase-like"/>
</dbReference>
<dbReference type="NCBIfam" id="TIGR01367">
    <property type="entry name" value="pyrE_Therm"/>
    <property type="match status" value="1"/>
</dbReference>
<dbReference type="PANTHER" id="PTHR19278">
    <property type="entry name" value="OROTATE PHOSPHORIBOSYLTRANSFERASE"/>
    <property type="match status" value="1"/>
</dbReference>
<dbReference type="PANTHER" id="PTHR19278:SF9">
    <property type="entry name" value="URIDINE 5'-MONOPHOSPHATE SYNTHASE"/>
    <property type="match status" value="1"/>
</dbReference>
<dbReference type="Pfam" id="PF00156">
    <property type="entry name" value="Pribosyltran"/>
    <property type="match status" value="1"/>
</dbReference>
<dbReference type="SUPFAM" id="SSF53271">
    <property type="entry name" value="PRTase-like"/>
    <property type="match status" value="1"/>
</dbReference>
<dbReference type="PROSITE" id="PS00103">
    <property type="entry name" value="PUR_PYR_PR_TRANSFER"/>
    <property type="match status" value="1"/>
</dbReference>
<feature type="chain" id="PRO_1000066207" description="Orotate phosphoribosyltransferase">
    <location>
        <begin position="1"/>
        <end position="192"/>
    </location>
</feature>
<feature type="binding site" evidence="1">
    <location>
        <begin position="116"/>
        <end position="124"/>
    </location>
    <ligand>
        <name>5-phospho-alpha-D-ribose 1-diphosphate</name>
        <dbReference type="ChEBI" id="CHEBI:58017"/>
    </ligand>
</feature>
<feature type="binding site" evidence="1">
    <location>
        <position position="120"/>
    </location>
    <ligand>
        <name>orotate</name>
        <dbReference type="ChEBI" id="CHEBI:30839"/>
    </ligand>
</feature>
<feature type="binding site" evidence="1">
    <location>
        <position position="148"/>
    </location>
    <ligand>
        <name>orotate</name>
        <dbReference type="ChEBI" id="CHEBI:30839"/>
    </ligand>
</feature>
<proteinExistence type="inferred from homology"/>
<protein>
    <recommendedName>
        <fullName evidence="1">Orotate phosphoribosyltransferase</fullName>
        <shortName evidence="1">OPRT</shortName>
        <shortName evidence="1">OPRTase</shortName>
        <ecNumber evidence="1">2.4.2.10</ecNumber>
    </recommendedName>
</protein>
<reference key="1">
    <citation type="journal article" date="2004" name="Proc. Natl. Acad. Sci. U.S.A.">
        <title>The louse-borne human pathogen Bartonella quintana is a genomic derivative of the zoonotic agent Bartonella henselae.</title>
        <authorList>
            <person name="Alsmark U.C.M."/>
            <person name="Frank A.C."/>
            <person name="Karlberg E.O."/>
            <person name="Legault B.-A."/>
            <person name="Ardell D.H."/>
            <person name="Canbaeck B."/>
            <person name="Eriksson A.-S."/>
            <person name="Naeslund A.K."/>
            <person name="Handley S.A."/>
            <person name="Huvet M."/>
            <person name="La Scola B."/>
            <person name="Holmberg M."/>
            <person name="Andersson S.G.E."/>
        </authorList>
    </citation>
    <scope>NUCLEOTIDE SEQUENCE [LARGE SCALE GENOMIC DNA]</scope>
    <source>
        <strain>ATCC 49882 / DSM 28221 / CCUG 30454 / Houston 1</strain>
    </source>
</reference>
<keyword id="KW-0328">Glycosyltransferase</keyword>
<keyword id="KW-0460">Magnesium</keyword>
<keyword id="KW-0665">Pyrimidine biosynthesis</keyword>
<keyword id="KW-0808">Transferase</keyword>
<gene>
    <name evidence="1" type="primary">pyrE</name>
    <name type="ordered locus">BH05050</name>
</gene>
<evidence type="ECO:0000255" key="1">
    <source>
        <dbReference type="HAMAP-Rule" id="MF_01208"/>
    </source>
</evidence>
<comment type="function">
    <text evidence="1">Catalyzes the transfer of a ribosyl phosphate group from 5-phosphoribose 1-diphosphate to orotate, leading to the formation of orotidine monophosphate (OMP).</text>
</comment>
<comment type="catalytic activity">
    <reaction evidence="1">
        <text>orotidine 5'-phosphate + diphosphate = orotate + 5-phospho-alpha-D-ribose 1-diphosphate</text>
        <dbReference type="Rhea" id="RHEA:10380"/>
        <dbReference type="ChEBI" id="CHEBI:30839"/>
        <dbReference type="ChEBI" id="CHEBI:33019"/>
        <dbReference type="ChEBI" id="CHEBI:57538"/>
        <dbReference type="ChEBI" id="CHEBI:58017"/>
        <dbReference type="EC" id="2.4.2.10"/>
    </reaction>
</comment>
<comment type="cofactor">
    <cofactor evidence="1">
        <name>Mg(2+)</name>
        <dbReference type="ChEBI" id="CHEBI:18420"/>
    </cofactor>
</comment>
<comment type="pathway">
    <text evidence="1">Pyrimidine metabolism; UMP biosynthesis via de novo pathway; UMP from orotate: step 1/2.</text>
</comment>
<comment type="subunit">
    <text evidence="1">Homodimer.</text>
</comment>
<comment type="similarity">
    <text evidence="1">Belongs to the purine/pyrimidine phosphoribosyltransferase family. PyrE subfamily.</text>
</comment>
<name>PYRE_BARHE</name>
<organism>
    <name type="scientific">Bartonella henselae (strain ATCC 49882 / DSM 28221 / CCUG 30454 / Houston 1)</name>
    <name type="common">Rochalimaea henselae</name>
    <dbReference type="NCBI Taxonomy" id="283166"/>
    <lineage>
        <taxon>Bacteria</taxon>
        <taxon>Pseudomonadati</taxon>
        <taxon>Pseudomonadota</taxon>
        <taxon>Alphaproteobacteria</taxon>
        <taxon>Hyphomicrobiales</taxon>
        <taxon>Bartonellaceae</taxon>
        <taxon>Bartonella</taxon>
    </lineage>
</organism>
<sequence>MNTQDVIDIFKQADAILEGHFILTSGRHSATYMQKAKVFMHAHLTEKLCRGLAEKIKKSVEEKIDYVVGPAIGGLIPSYETSRHLGIPSLWVERVNGRFELRRFEIKKGARVVIVEDIVTTGLSIRETVEALVTAGANVLASACILDRSGGKVDVGVPLISLAEYEIASYASDAVPAELAELPAIKPGSRNI</sequence>
<accession>Q6G463</accession>